<proteinExistence type="inferred from homology"/>
<comment type="catalytic activity">
    <reaction evidence="1">
        <text>tRNA(Cys) + L-cysteine + ATP = L-cysteinyl-tRNA(Cys) + AMP + diphosphate</text>
        <dbReference type="Rhea" id="RHEA:17773"/>
        <dbReference type="Rhea" id="RHEA-COMP:9661"/>
        <dbReference type="Rhea" id="RHEA-COMP:9679"/>
        <dbReference type="ChEBI" id="CHEBI:30616"/>
        <dbReference type="ChEBI" id="CHEBI:33019"/>
        <dbReference type="ChEBI" id="CHEBI:35235"/>
        <dbReference type="ChEBI" id="CHEBI:78442"/>
        <dbReference type="ChEBI" id="CHEBI:78517"/>
        <dbReference type="ChEBI" id="CHEBI:456215"/>
        <dbReference type="EC" id="6.1.1.16"/>
    </reaction>
</comment>
<comment type="cofactor">
    <cofactor evidence="1">
        <name>Zn(2+)</name>
        <dbReference type="ChEBI" id="CHEBI:29105"/>
    </cofactor>
    <text evidence="1">Binds 1 zinc ion per subunit.</text>
</comment>
<comment type="subunit">
    <text evidence="1">Monomer.</text>
</comment>
<comment type="subcellular location">
    <subcellularLocation>
        <location evidence="1">Cytoplasm</location>
    </subcellularLocation>
</comment>
<comment type="similarity">
    <text evidence="1">Belongs to the class-I aminoacyl-tRNA synthetase family.</text>
</comment>
<accession>B2S0U7</accession>
<name>SYC_BORHD</name>
<reference key="1">
    <citation type="submission" date="2004-12" db="EMBL/GenBank/DDBJ databases">
        <title>The genome sequence of Borrelia hermsii and Borrelia turicatae: comparative analysis of two agents of endemic N. America relapsing fever.</title>
        <authorList>
            <person name="Porcella S.F."/>
            <person name="Raffel S.J."/>
            <person name="Schrumpf M.E."/>
            <person name="Montgomery B."/>
            <person name="Smith T."/>
            <person name="Schwan T.G."/>
        </authorList>
    </citation>
    <scope>NUCLEOTIDE SEQUENCE [LARGE SCALE GENOMIC DNA]</scope>
    <source>
        <strain>HS1 / DAH</strain>
    </source>
</reference>
<feature type="chain" id="PRO_1000090819" description="Cysteine--tRNA ligase">
    <location>
        <begin position="1"/>
        <end position="481"/>
    </location>
</feature>
<feature type="short sequence motif" description="'HIGH' region">
    <location>
        <begin position="29"/>
        <end position="39"/>
    </location>
</feature>
<feature type="short sequence motif" description="'KMSKS' region">
    <location>
        <begin position="279"/>
        <end position="283"/>
    </location>
</feature>
<feature type="binding site" evidence="1">
    <location>
        <position position="27"/>
    </location>
    <ligand>
        <name>Zn(2+)</name>
        <dbReference type="ChEBI" id="CHEBI:29105"/>
    </ligand>
</feature>
<feature type="binding site" evidence="1">
    <location>
        <position position="222"/>
    </location>
    <ligand>
        <name>Zn(2+)</name>
        <dbReference type="ChEBI" id="CHEBI:29105"/>
    </ligand>
</feature>
<feature type="binding site" evidence="1">
    <location>
        <position position="247"/>
    </location>
    <ligand>
        <name>Zn(2+)</name>
        <dbReference type="ChEBI" id="CHEBI:29105"/>
    </ligand>
</feature>
<feature type="binding site" evidence="1">
    <location>
        <position position="251"/>
    </location>
    <ligand>
        <name>Zn(2+)</name>
        <dbReference type="ChEBI" id="CHEBI:29105"/>
    </ligand>
</feature>
<feature type="binding site" evidence="1">
    <location>
        <position position="282"/>
    </location>
    <ligand>
        <name>ATP</name>
        <dbReference type="ChEBI" id="CHEBI:30616"/>
    </ligand>
</feature>
<evidence type="ECO:0000255" key="1">
    <source>
        <dbReference type="HAMAP-Rule" id="MF_00041"/>
    </source>
</evidence>
<protein>
    <recommendedName>
        <fullName evidence="1">Cysteine--tRNA ligase</fullName>
        <ecNumber evidence="1">6.1.1.16</ecNumber>
    </recommendedName>
    <alternativeName>
        <fullName evidence="1">Cysteinyl-tRNA synthetase</fullName>
        <shortName evidence="1">CysRS</shortName>
    </alternativeName>
</protein>
<organism>
    <name type="scientific">Borrelia hermsii (strain HS1 / DAH)</name>
    <dbReference type="NCBI Taxonomy" id="314723"/>
    <lineage>
        <taxon>Bacteria</taxon>
        <taxon>Pseudomonadati</taxon>
        <taxon>Spirochaetota</taxon>
        <taxon>Spirochaetia</taxon>
        <taxon>Spirochaetales</taxon>
        <taxon>Borreliaceae</taxon>
        <taxon>Borrelia</taxon>
    </lineage>
</organism>
<dbReference type="EC" id="6.1.1.16" evidence="1"/>
<dbReference type="EMBL" id="CP000048">
    <property type="protein sequence ID" value="AAX17103.1"/>
    <property type="molecule type" value="Genomic_DNA"/>
</dbReference>
<dbReference type="RefSeq" id="WP_012422354.1">
    <property type="nucleotide sequence ID" value="NZ_CP073136.1"/>
</dbReference>
<dbReference type="SMR" id="B2S0U7"/>
<dbReference type="KEGG" id="bhr:BH0599"/>
<dbReference type="HOGENOM" id="CLU_013528_0_1_12"/>
<dbReference type="Proteomes" id="UP000008834">
    <property type="component" value="Chromosome"/>
</dbReference>
<dbReference type="GO" id="GO:0005829">
    <property type="term" value="C:cytosol"/>
    <property type="evidence" value="ECO:0007669"/>
    <property type="project" value="TreeGrafter"/>
</dbReference>
<dbReference type="GO" id="GO:0005524">
    <property type="term" value="F:ATP binding"/>
    <property type="evidence" value="ECO:0007669"/>
    <property type="project" value="UniProtKB-UniRule"/>
</dbReference>
<dbReference type="GO" id="GO:0004817">
    <property type="term" value="F:cysteine-tRNA ligase activity"/>
    <property type="evidence" value="ECO:0007669"/>
    <property type="project" value="UniProtKB-UniRule"/>
</dbReference>
<dbReference type="GO" id="GO:0008270">
    <property type="term" value="F:zinc ion binding"/>
    <property type="evidence" value="ECO:0007669"/>
    <property type="project" value="UniProtKB-UniRule"/>
</dbReference>
<dbReference type="GO" id="GO:0006423">
    <property type="term" value="P:cysteinyl-tRNA aminoacylation"/>
    <property type="evidence" value="ECO:0007669"/>
    <property type="project" value="UniProtKB-UniRule"/>
</dbReference>
<dbReference type="CDD" id="cd00672">
    <property type="entry name" value="CysRS_core"/>
    <property type="match status" value="1"/>
</dbReference>
<dbReference type="Gene3D" id="1.20.120.1910">
    <property type="entry name" value="Cysteine-tRNA ligase, C-terminal anti-codon recognition domain"/>
    <property type="match status" value="1"/>
</dbReference>
<dbReference type="Gene3D" id="3.40.50.620">
    <property type="entry name" value="HUPs"/>
    <property type="match status" value="1"/>
</dbReference>
<dbReference type="HAMAP" id="MF_00041">
    <property type="entry name" value="Cys_tRNA_synth"/>
    <property type="match status" value="1"/>
</dbReference>
<dbReference type="InterPro" id="IPR015803">
    <property type="entry name" value="Cys-tRNA-ligase"/>
</dbReference>
<dbReference type="InterPro" id="IPR024909">
    <property type="entry name" value="Cys-tRNA/MSH_ligase"/>
</dbReference>
<dbReference type="InterPro" id="IPR014729">
    <property type="entry name" value="Rossmann-like_a/b/a_fold"/>
</dbReference>
<dbReference type="InterPro" id="IPR032678">
    <property type="entry name" value="tRNA-synt_1_cat_dom"/>
</dbReference>
<dbReference type="InterPro" id="IPR009080">
    <property type="entry name" value="tRNAsynth_Ia_anticodon-bd"/>
</dbReference>
<dbReference type="NCBIfam" id="TIGR00435">
    <property type="entry name" value="cysS"/>
    <property type="match status" value="1"/>
</dbReference>
<dbReference type="NCBIfam" id="NF011107">
    <property type="entry name" value="PRK14534.1"/>
    <property type="match status" value="1"/>
</dbReference>
<dbReference type="PANTHER" id="PTHR10890:SF3">
    <property type="entry name" value="CYSTEINE--TRNA LIGASE, CYTOPLASMIC"/>
    <property type="match status" value="1"/>
</dbReference>
<dbReference type="PANTHER" id="PTHR10890">
    <property type="entry name" value="CYSTEINYL-TRNA SYNTHETASE"/>
    <property type="match status" value="1"/>
</dbReference>
<dbReference type="Pfam" id="PF01406">
    <property type="entry name" value="tRNA-synt_1e"/>
    <property type="match status" value="1"/>
</dbReference>
<dbReference type="PRINTS" id="PR00983">
    <property type="entry name" value="TRNASYNTHCYS"/>
</dbReference>
<dbReference type="SUPFAM" id="SSF47323">
    <property type="entry name" value="Anticodon-binding domain of a subclass of class I aminoacyl-tRNA synthetases"/>
    <property type="match status" value="1"/>
</dbReference>
<dbReference type="SUPFAM" id="SSF52374">
    <property type="entry name" value="Nucleotidylyl transferase"/>
    <property type="match status" value="1"/>
</dbReference>
<keyword id="KW-0030">Aminoacyl-tRNA synthetase</keyword>
<keyword id="KW-0067">ATP-binding</keyword>
<keyword id="KW-0963">Cytoplasm</keyword>
<keyword id="KW-0436">Ligase</keyword>
<keyword id="KW-0479">Metal-binding</keyword>
<keyword id="KW-0547">Nucleotide-binding</keyword>
<keyword id="KW-0648">Protein biosynthesis</keyword>
<keyword id="KW-0862">Zinc</keyword>
<sequence>MLLKLYNTKTKSLSDIKNFSDTKVYACGPTVYNYAHIGNLRTYIFEDLLIKSLRLLKYNVNYAMNITDIGHLTGDFDEGEDKVVKAARERGLTVYEISRFFTEAFFDDCAKLNIVYPDKVLVASEYIASMIEVVKVLEQNGFTYFVNGNVYFDTSRFNGYGQMAGINLNNFGRSSVSRVEIDLSKKNKSDFVLWFTNSKFKDQEMKWDSPWGFGYPSWHLECAAMNLDYFKSTLDIHLGGVDHVGVHHINEIAIAECYLNKMWCDMFVHGEFLIMEDEKMSKSNNNFITIKDLESDGFSPLDFRYFCLTAHYRTQLKFTFSNLRACKIARENMLNKLTFFYSSLSQFDMALLNKNCENIESVSENKYYNNFLEKIAFDLSIPQALALLWDIVKDDDLSALLKLLLAFKFDEVLSLGLKEGVLREIERDRVNIDDTMHSLIEERRLAKLRKDFKRADEIREYFRSKGFVLIDTEEGTKVKRG</sequence>
<gene>
    <name evidence="1" type="primary">cysS</name>
    <name type="ordered locus">BH0599</name>
</gene>